<keyword id="KW-1185">Reference proteome</keyword>
<keyword id="KW-0687">Ribonucleoprotein</keyword>
<keyword id="KW-0689">Ribosomal protein</keyword>
<keyword id="KW-0694">RNA-binding</keyword>
<keyword id="KW-0699">rRNA-binding</keyword>
<name>RS20_MYCMS</name>
<protein>
    <recommendedName>
        <fullName evidence="1">Small ribosomal subunit protein bS20</fullName>
    </recommendedName>
    <alternativeName>
        <fullName evidence="2">30S ribosomal protein S20</fullName>
    </alternativeName>
</protein>
<accession>Q6MUE6</accession>
<reference key="1">
    <citation type="journal article" date="2004" name="Genome Res.">
        <title>The genome sequence of Mycoplasma mycoides subsp. mycoides SC type strain PG1T, the causative agent of contagious bovine pleuropneumonia (CBPP).</title>
        <authorList>
            <person name="Westberg J."/>
            <person name="Persson A."/>
            <person name="Holmberg A."/>
            <person name="Goesmann A."/>
            <person name="Lundeberg J."/>
            <person name="Johansson K.-E."/>
            <person name="Pettersson B."/>
            <person name="Uhlen M."/>
        </authorList>
    </citation>
    <scope>NUCLEOTIDE SEQUENCE [LARGE SCALE GENOMIC DNA]</scope>
    <source>
        <strain>CCUG 32753 / NCTC 10114 / PG1</strain>
    </source>
</reference>
<feature type="chain" id="PRO_0000236441" description="Small ribosomal subunit protein bS20">
    <location>
        <begin position="1"/>
        <end position="81"/>
    </location>
</feature>
<evidence type="ECO:0000255" key="1">
    <source>
        <dbReference type="HAMAP-Rule" id="MF_00500"/>
    </source>
</evidence>
<evidence type="ECO:0000305" key="2"/>
<proteinExistence type="inferred from homology"/>
<gene>
    <name evidence="1" type="primary">rpsT</name>
    <name type="ordered locus">MSC_0086</name>
</gene>
<sequence length="81" mass="8954">MANIKSQEKRVLTNEKSRLANKAFKSEIKTAIKKALNAKSNDDANKAELVNHAVSLVDKGLKKGIFKDNKAAREKSRLMSA</sequence>
<dbReference type="EMBL" id="BX293980">
    <property type="protein sequence ID" value="CAE76738.1"/>
    <property type="status" value="ALT_INIT"/>
    <property type="molecule type" value="Genomic_DNA"/>
</dbReference>
<dbReference type="RefSeq" id="NP_975096.3">
    <property type="nucleotide sequence ID" value="NC_005364.2"/>
</dbReference>
<dbReference type="RefSeq" id="WP_008362910.1">
    <property type="nucleotide sequence ID" value="NC_005364.2"/>
</dbReference>
<dbReference type="SMR" id="Q6MUE6"/>
<dbReference type="STRING" id="272632.MSC_0086"/>
<dbReference type="GeneID" id="93425985"/>
<dbReference type="KEGG" id="mmy:MSC_0086"/>
<dbReference type="PATRIC" id="fig|272632.4.peg.88"/>
<dbReference type="eggNOG" id="COG0268">
    <property type="taxonomic scope" value="Bacteria"/>
</dbReference>
<dbReference type="HOGENOM" id="CLU_160655_1_2_14"/>
<dbReference type="Proteomes" id="UP000001016">
    <property type="component" value="Chromosome"/>
</dbReference>
<dbReference type="GO" id="GO:0005829">
    <property type="term" value="C:cytosol"/>
    <property type="evidence" value="ECO:0007669"/>
    <property type="project" value="TreeGrafter"/>
</dbReference>
<dbReference type="GO" id="GO:0015935">
    <property type="term" value="C:small ribosomal subunit"/>
    <property type="evidence" value="ECO:0007669"/>
    <property type="project" value="TreeGrafter"/>
</dbReference>
<dbReference type="GO" id="GO:0070181">
    <property type="term" value="F:small ribosomal subunit rRNA binding"/>
    <property type="evidence" value="ECO:0007669"/>
    <property type="project" value="TreeGrafter"/>
</dbReference>
<dbReference type="GO" id="GO:0003735">
    <property type="term" value="F:structural constituent of ribosome"/>
    <property type="evidence" value="ECO:0007669"/>
    <property type="project" value="InterPro"/>
</dbReference>
<dbReference type="GO" id="GO:0006412">
    <property type="term" value="P:translation"/>
    <property type="evidence" value="ECO:0007669"/>
    <property type="project" value="UniProtKB-UniRule"/>
</dbReference>
<dbReference type="Gene3D" id="1.20.58.110">
    <property type="entry name" value="Ribosomal protein S20"/>
    <property type="match status" value="1"/>
</dbReference>
<dbReference type="HAMAP" id="MF_00500">
    <property type="entry name" value="Ribosomal_bS20"/>
    <property type="match status" value="1"/>
</dbReference>
<dbReference type="InterPro" id="IPR002583">
    <property type="entry name" value="Ribosomal_bS20"/>
</dbReference>
<dbReference type="InterPro" id="IPR036510">
    <property type="entry name" value="Ribosomal_bS20_sf"/>
</dbReference>
<dbReference type="NCBIfam" id="TIGR00029">
    <property type="entry name" value="S20"/>
    <property type="match status" value="1"/>
</dbReference>
<dbReference type="PANTHER" id="PTHR33398">
    <property type="entry name" value="30S RIBOSOMAL PROTEIN S20"/>
    <property type="match status" value="1"/>
</dbReference>
<dbReference type="PANTHER" id="PTHR33398:SF1">
    <property type="entry name" value="SMALL RIBOSOMAL SUBUNIT PROTEIN BS20C"/>
    <property type="match status" value="1"/>
</dbReference>
<dbReference type="Pfam" id="PF01649">
    <property type="entry name" value="Ribosomal_S20p"/>
    <property type="match status" value="1"/>
</dbReference>
<dbReference type="SUPFAM" id="SSF46992">
    <property type="entry name" value="Ribosomal protein S20"/>
    <property type="match status" value="1"/>
</dbReference>
<comment type="function">
    <text evidence="1">Binds directly to 16S ribosomal RNA.</text>
</comment>
<comment type="similarity">
    <text evidence="1">Belongs to the bacterial ribosomal protein bS20 family.</text>
</comment>
<comment type="sequence caution" evidence="2">
    <conflict type="erroneous initiation">
        <sequence resource="EMBL-CDS" id="CAE76738"/>
    </conflict>
</comment>
<organism>
    <name type="scientific">Mycoplasma mycoides subsp. mycoides SC (strain CCUG 32753 / NCTC 10114 / PG1)</name>
    <dbReference type="NCBI Taxonomy" id="272632"/>
    <lineage>
        <taxon>Bacteria</taxon>
        <taxon>Bacillati</taxon>
        <taxon>Mycoplasmatota</taxon>
        <taxon>Mollicutes</taxon>
        <taxon>Mycoplasmataceae</taxon>
        <taxon>Mycoplasma</taxon>
    </lineage>
</organism>